<accession>P22695</accession>
<accession>B3KSN4</accession>
<accession>Q9BQ05</accession>
<evidence type="ECO:0000250" key="1">
    <source>
        <dbReference type="UniProtKB" id="P07257"/>
    </source>
</evidence>
<evidence type="ECO:0000250" key="2">
    <source>
        <dbReference type="UniProtKB" id="P23004"/>
    </source>
</evidence>
<evidence type="ECO:0000250" key="3">
    <source>
        <dbReference type="UniProtKB" id="Q9DB77"/>
    </source>
</evidence>
<evidence type="ECO:0000269" key="4">
    <source>
    </source>
</evidence>
<evidence type="ECO:0000269" key="5">
    <source>
    </source>
</evidence>
<evidence type="ECO:0000269" key="6">
    <source>
    </source>
</evidence>
<evidence type="ECO:0000269" key="7">
    <source>
    </source>
</evidence>
<evidence type="ECO:0000269" key="8">
    <source>
    </source>
</evidence>
<evidence type="ECO:0000305" key="9"/>
<evidence type="ECO:0000305" key="10">
    <source>
    </source>
</evidence>
<evidence type="ECO:0007829" key="11">
    <source>
        <dbReference type="PDB" id="5XTE"/>
    </source>
</evidence>
<proteinExistence type="evidence at protein level"/>
<organism>
    <name type="scientific">Homo sapiens</name>
    <name type="common">Human</name>
    <dbReference type="NCBI Taxonomy" id="9606"/>
    <lineage>
        <taxon>Eukaryota</taxon>
        <taxon>Metazoa</taxon>
        <taxon>Chordata</taxon>
        <taxon>Craniata</taxon>
        <taxon>Vertebrata</taxon>
        <taxon>Euteleostomi</taxon>
        <taxon>Mammalia</taxon>
        <taxon>Eutheria</taxon>
        <taxon>Euarchontoglires</taxon>
        <taxon>Primates</taxon>
        <taxon>Haplorrhini</taxon>
        <taxon>Catarrhini</taxon>
        <taxon>Hominidae</taxon>
        <taxon>Homo</taxon>
    </lineage>
</organism>
<reference key="1">
    <citation type="journal article" date="1989" name="J. Biol. Chem.">
        <title>Complementary DNA encoding core protein II of human mitochondrial cytochrome bc1 complex. Substantial diversity in deduced primary structure from its yeast counterpart.</title>
        <authorList>
            <person name="Hosokawa Y."/>
            <person name="Suzuki H."/>
            <person name="Toda H."/>
            <person name="Nishikimi M."/>
            <person name="Ozawa T."/>
        </authorList>
    </citation>
    <scope>NUCLEOTIDE SEQUENCE [MRNA]</scope>
    <scope>VARIANT GLN-183</scope>
</reference>
<reference key="2">
    <citation type="journal article" date="2004" name="Nat. Genet.">
        <title>Complete sequencing and characterization of 21,243 full-length human cDNAs.</title>
        <authorList>
            <person name="Ota T."/>
            <person name="Suzuki Y."/>
            <person name="Nishikawa T."/>
            <person name="Otsuki T."/>
            <person name="Sugiyama T."/>
            <person name="Irie R."/>
            <person name="Wakamatsu A."/>
            <person name="Hayashi K."/>
            <person name="Sato H."/>
            <person name="Nagai K."/>
            <person name="Kimura K."/>
            <person name="Makita H."/>
            <person name="Sekine M."/>
            <person name="Obayashi M."/>
            <person name="Nishi T."/>
            <person name="Shibahara T."/>
            <person name="Tanaka T."/>
            <person name="Ishii S."/>
            <person name="Yamamoto J."/>
            <person name="Saito K."/>
            <person name="Kawai Y."/>
            <person name="Isono Y."/>
            <person name="Nakamura Y."/>
            <person name="Nagahari K."/>
            <person name="Murakami K."/>
            <person name="Yasuda T."/>
            <person name="Iwayanagi T."/>
            <person name="Wagatsuma M."/>
            <person name="Shiratori A."/>
            <person name="Sudo H."/>
            <person name="Hosoiri T."/>
            <person name="Kaku Y."/>
            <person name="Kodaira H."/>
            <person name="Kondo H."/>
            <person name="Sugawara M."/>
            <person name="Takahashi M."/>
            <person name="Kanda K."/>
            <person name="Yokoi T."/>
            <person name="Furuya T."/>
            <person name="Kikkawa E."/>
            <person name="Omura Y."/>
            <person name="Abe K."/>
            <person name="Kamihara K."/>
            <person name="Katsuta N."/>
            <person name="Sato K."/>
            <person name="Tanikawa M."/>
            <person name="Yamazaki M."/>
            <person name="Ninomiya K."/>
            <person name="Ishibashi T."/>
            <person name="Yamashita H."/>
            <person name="Murakawa K."/>
            <person name="Fujimori K."/>
            <person name="Tanai H."/>
            <person name="Kimata M."/>
            <person name="Watanabe M."/>
            <person name="Hiraoka S."/>
            <person name="Chiba Y."/>
            <person name="Ishida S."/>
            <person name="Ono Y."/>
            <person name="Takiguchi S."/>
            <person name="Watanabe S."/>
            <person name="Yosida M."/>
            <person name="Hotuta T."/>
            <person name="Kusano J."/>
            <person name="Kanehori K."/>
            <person name="Takahashi-Fujii A."/>
            <person name="Hara H."/>
            <person name="Tanase T.-O."/>
            <person name="Nomura Y."/>
            <person name="Togiya S."/>
            <person name="Komai F."/>
            <person name="Hara R."/>
            <person name="Takeuchi K."/>
            <person name="Arita M."/>
            <person name="Imose N."/>
            <person name="Musashino K."/>
            <person name="Yuuki H."/>
            <person name="Oshima A."/>
            <person name="Sasaki N."/>
            <person name="Aotsuka S."/>
            <person name="Yoshikawa Y."/>
            <person name="Matsunawa H."/>
            <person name="Ichihara T."/>
            <person name="Shiohata N."/>
            <person name="Sano S."/>
            <person name="Moriya S."/>
            <person name="Momiyama H."/>
            <person name="Satoh N."/>
            <person name="Takami S."/>
            <person name="Terashima Y."/>
            <person name="Suzuki O."/>
            <person name="Nakagawa S."/>
            <person name="Senoh A."/>
            <person name="Mizoguchi H."/>
            <person name="Goto Y."/>
            <person name="Shimizu F."/>
            <person name="Wakebe H."/>
            <person name="Hishigaki H."/>
            <person name="Watanabe T."/>
            <person name="Sugiyama A."/>
            <person name="Takemoto M."/>
            <person name="Kawakami B."/>
            <person name="Yamazaki M."/>
            <person name="Watanabe K."/>
            <person name="Kumagai A."/>
            <person name="Itakura S."/>
            <person name="Fukuzumi Y."/>
            <person name="Fujimori Y."/>
            <person name="Komiyama M."/>
            <person name="Tashiro H."/>
            <person name="Tanigami A."/>
            <person name="Fujiwara T."/>
            <person name="Ono T."/>
            <person name="Yamada K."/>
            <person name="Fujii Y."/>
            <person name="Ozaki K."/>
            <person name="Hirao M."/>
            <person name="Ohmori Y."/>
            <person name="Kawabata A."/>
            <person name="Hikiji T."/>
            <person name="Kobatake N."/>
            <person name="Inagaki H."/>
            <person name="Ikema Y."/>
            <person name="Okamoto S."/>
            <person name="Okitani R."/>
            <person name="Kawakami T."/>
            <person name="Noguchi S."/>
            <person name="Itoh T."/>
            <person name="Shigeta K."/>
            <person name="Senba T."/>
            <person name="Matsumura K."/>
            <person name="Nakajima Y."/>
            <person name="Mizuno T."/>
            <person name="Morinaga M."/>
            <person name="Sasaki M."/>
            <person name="Togashi T."/>
            <person name="Oyama M."/>
            <person name="Hata H."/>
            <person name="Watanabe M."/>
            <person name="Komatsu T."/>
            <person name="Mizushima-Sugano J."/>
            <person name="Satoh T."/>
            <person name="Shirai Y."/>
            <person name="Takahashi Y."/>
            <person name="Nakagawa K."/>
            <person name="Okumura K."/>
            <person name="Nagase T."/>
            <person name="Nomura N."/>
            <person name="Kikuchi H."/>
            <person name="Masuho Y."/>
            <person name="Yamashita R."/>
            <person name="Nakai K."/>
            <person name="Yada T."/>
            <person name="Nakamura Y."/>
            <person name="Ohara O."/>
            <person name="Isogai T."/>
            <person name="Sugano S."/>
        </authorList>
    </citation>
    <scope>NUCLEOTIDE SEQUENCE [LARGE SCALE MRNA]</scope>
    <source>
        <tissue>Uterus</tissue>
    </source>
</reference>
<reference key="3">
    <citation type="submission" date="2005-07" db="EMBL/GenBank/DDBJ databases">
        <authorList>
            <person name="Mural R.J."/>
            <person name="Istrail S."/>
            <person name="Sutton G.G."/>
            <person name="Florea L."/>
            <person name="Halpern A.L."/>
            <person name="Mobarry C.M."/>
            <person name="Lippert R."/>
            <person name="Walenz B."/>
            <person name="Shatkay H."/>
            <person name="Dew I."/>
            <person name="Miller J.R."/>
            <person name="Flanigan M.J."/>
            <person name="Edwards N.J."/>
            <person name="Bolanos R."/>
            <person name="Fasulo D."/>
            <person name="Halldorsson B.V."/>
            <person name="Hannenhalli S."/>
            <person name="Turner R."/>
            <person name="Yooseph S."/>
            <person name="Lu F."/>
            <person name="Nusskern D.R."/>
            <person name="Shue B.C."/>
            <person name="Zheng X.H."/>
            <person name="Zhong F."/>
            <person name="Delcher A.L."/>
            <person name="Huson D.H."/>
            <person name="Kravitz S.A."/>
            <person name="Mouchard L."/>
            <person name="Reinert K."/>
            <person name="Remington K.A."/>
            <person name="Clark A.G."/>
            <person name="Waterman M.S."/>
            <person name="Eichler E.E."/>
            <person name="Adams M.D."/>
            <person name="Hunkapiller M.W."/>
            <person name="Myers E.W."/>
            <person name="Venter J.C."/>
        </authorList>
    </citation>
    <scope>NUCLEOTIDE SEQUENCE [LARGE SCALE GENOMIC DNA]</scope>
</reference>
<reference key="4">
    <citation type="journal article" date="2004" name="Genome Res.">
        <title>The status, quality, and expansion of the NIH full-length cDNA project: the Mammalian Gene Collection (MGC).</title>
        <authorList>
            <consortium name="The MGC Project Team"/>
        </authorList>
    </citation>
    <scope>NUCLEOTIDE SEQUENCE [LARGE SCALE MRNA]</scope>
    <source>
        <tissue>Lung</tissue>
        <tissue>Skin</tissue>
    </source>
</reference>
<reference key="5">
    <citation type="submission" date="2007-03" db="UniProtKB">
        <authorList>
            <person name="Lubec G."/>
            <person name="Vishwanath V."/>
        </authorList>
    </citation>
    <scope>PROTEIN SEQUENCE OF 43-60; 71-84 AND 200-217</scope>
    <scope>IDENTIFICATION BY MASS SPECTROMETRY</scope>
    <source>
        <tissue>Brain</tissue>
        <tissue>Cajal-Retzius cell</tissue>
    </source>
</reference>
<reference key="6">
    <citation type="journal article" date="2011" name="BMC Syst. Biol.">
        <title>Initial characterization of the human central proteome.</title>
        <authorList>
            <person name="Burkard T.R."/>
            <person name="Planyavsky M."/>
            <person name="Kaupe I."/>
            <person name="Breitwieser F.P."/>
            <person name="Buerckstuemmer T."/>
            <person name="Bennett K.L."/>
            <person name="Superti-Furga G."/>
            <person name="Colinge J."/>
        </authorList>
    </citation>
    <scope>IDENTIFICATION BY MASS SPECTROMETRY [LARGE SCALE ANALYSIS]</scope>
</reference>
<reference key="7">
    <citation type="journal article" date="2014" name="J. Proteomics">
        <title>An enzyme assisted RP-RPLC approach for in-depth analysis of human liver phosphoproteome.</title>
        <authorList>
            <person name="Bian Y."/>
            <person name="Song C."/>
            <person name="Cheng K."/>
            <person name="Dong M."/>
            <person name="Wang F."/>
            <person name="Huang J."/>
            <person name="Sun D."/>
            <person name="Wang L."/>
            <person name="Ye M."/>
            <person name="Zou H."/>
        </authorList>
    </citation>
    <scope>IDENTIFICATION BY MASS SPECTROMETRY [LARGE SCALE ANALYSIS]</scope>
    <source>
        <tissue>Liver</tissue>
    </source>
</reference>
<reference key="8">
    <citation type="journal article" date="2015" name="Proteomics">
        <title>N-terminome analysis of the human mitochondrial proteome.</title>
        <authorList>
            <person name="Vaca Jacome A.S."/>
            <person name="Rabilloud T."/>
            <person name="Schaeffer-Reiss C."/>
            <person name="Rompais M."/>
            <person name="Ayoub D."/>
            <person name="Lane L."/>
            <person name="Bairoch A."/>
            <person name="Van Dorsselaer A."/>
            <person name="Carapito C."/>
        </authorList>
    </citation>
    <scope>IDENTIFICATION BY MASS SPECTROMETRY [LARGE SCALE ANALYSIS]</scope>
</reference>
<reference key="9">
    <citation type="journal article" date="2018" name="Cell Cycle">
        <title>Mitochondrial complex III Rieske Fe-S protein processing and assembly.</title>
        <authorList>
            <person name="Fernandez-Vizarra E."/>
            <person name="Zeviani M."/>
        </authorList>
    </citation>
    <scope>FUNCTION</scope>
</reference>
<reference key="10">
    <citation type="journal article" date="2019" name="IScience">
        <title>Rewiring of the Human Mitochondrial Interactome during Neuronal Reprogramming Reveals Regulators of the Respirasome and Neurogenesis.</title>
        <authorList>
            <person name="Moutaoufik M.T."/>
            <person name="Malty R."/>
            <person name="Amin S."/>
            <person name="Zhang Q."/>
            <person name="Phanse S."/>
            <person name="Gagarinova A."/>
            <person name="Zilocchi M."/>
            <person name="Hoell L."/>
            <person name="Minic Z."/>
            <person name="Gagarinova M."/>
            <person name="Aoki H."/>
            <person name="Stockwell J."/>
            <person name="Jessulat M."/>
            <person name="Goebels F."/>
            <person name="Broderick K."/>
            <person name="Scott N.E."/>
            <person name="Vlasblom J."/>
            <person name="Musso G."/>
            <person name="Prasad B."/>
            <person name="Lamantea E."/>
            <person name="Garavaglia B."/>
            <person name="Rajput A."/>
            <person name="Murayama K."/>
            <person name="Okazaki Y."/>
            <person name="Foster L.J."/>
            <person name="Bader G.D."/>
            <person name="Cayabyab F.S."/>
            <person name="Babu M."/>
        </authorList>
    </citation>
    <scope>IDENTIFICATION BY MASS SPECTROMETRY</scope>
    <scope>INTERACTION WITH RAB5IF</scope>
</reference>
<reference key="11">
    <citation type="journal article" date="2017" name="Cell">
        <title>Architecture of human mitochondrial respiratory megacomplex I2III2IV2.</title>
        <authorList>
            <person name="Guo R."/>
            <person name="Zong S."/>
            <person name="Wu M."/>
            <person name="Gu J."/>
            <person name="Yang M."/>
        </authorList>
    </citation>
    <scope>STRUCTURE BY ELECTRON MICROSCOPY (3.40 ANGSTROMS)</scope>
</reference>
<reference key="12">
    <citation type="journal article" date="2006" name="Science">
        <title>The consensus coding sequences of human breast and colorectal cancers.</title>
        <authorList>
            <person name="Sjoeblom T."/>
            <person name="Jones S."/>
            <person name="Wood L.D."/>
            <person name="Parsons D.W."/>
            <person name="Lin J."/>
            <person name="Barber T.D."/>
            <person name="Mandelker D."/>
            <person name="Leary R.J."/>
            <person name="Ptak J."/>
            <person name="Silliman N."/>
            <person name="Szabo S."/>
            <person name="Buckhaults P."/>
            <person name="Farrell C."/>
            <person name="Meeh P."/>
            <person name="Markowitz S.D."/>
            <person name="Willis J."/>
            <person name="Dawson D."/>
            <person name="Willson J.K.V."/>
            <person name="Gazdar A.F."/>
            <person name="Hartigan J."/>
            <person name="Wu L."/>
            <person name="Liu C."/>
            <person name="Parmigiani G."/>
            <person name="Park B.H."/>
            <person name="Bachman K.E."/>
            <person name="Papadopoulos N."/>
            <person name="Vogelstein B."/>
            <person name="Kinzler K.W."/>
            <person name="Velculescu V.E."/>
        </authorList>
    </citation>
    <scope>VARIANT [LARGE SCALE ANALYSIS] TYR-208</scope>
</reference>
<reference key="13">
    <citation type="journal article" date="2013" name="Hum. Mutat.">
        <title>Mitochondrial complex III deficiency caused by a homozygous UQCRC2 mutation presenting with neonatal-onset recurrent metabolic decompensation.</title>
        <authorList>
            <person name="Miyake N."/>
            <person name="Yano S."/>
            <person name="Sakai C."/>
            <person name="Hatakeyama H."/>
            <person name="Matsushima Y."/>
            <person name="Shiina M."/>
            <person name="Watanabe Y."/>
            <person name="Bartley J."/>
            <person name="Abdenur J.E."/>
            <person name="Wang R.Y."/>
            <person name="Chang R."/>
            <person name="Tsurusaki Y."/>
            <person name="Doi H."/>
            <person name="Nakashima M."/>
            <person name="Saitsu H."/>
            <person name="Ogata K."/>
            <person name="Goto Y."/>
            <person name="Matsumoto N."/>
        </authorList>
    </citation>
    <scope>VARIANT MC3DN5 TRP-183</scope>
</reference>
<dbReference type="EMBL" id="J04973">
    <property type="protein sequence ID" value="AAA35710.1"/>
    <property type="molecule type" value="mRNA"/>
</dbReference>
<dbReference type="EMBL" id="AK094006">
    <property type="protein sequence ID" value="BAG52796.1"/>
    <property type="molecule type" value="mRNA"/>
</dbReference>
<dbReference type="EMBL" id="CH471249">
    <property type="protein sequence ID" value="EAW50592.1"/>
    <property type="molecule type" value="Genomic_DNA"/>
</dbReference>
<dbReference type="EMBL" id="BC003136">
    <property type="protein sequence ID" value="AAH03136.1"/>
    <property type="molecule type" value="mRNA"/>
</dbReference>
<dbReference type="EMBL" id="BC000484">
    <property type="protein sequence ID" value="AAH00484.1"/>
    <property type="molecule type" value="mRNA"/>
</dbReference>
<dbReference type="CCDS" id="CCDS10601.1"/>
<dbReference type="PIR" id="A32629">
    <property type="entry name" value="A32629"/>
</dbReference>
<dbReference type="RefSeq" id="NP_003357.2">
    <property type="nucleotide sequence ID" value="NM_003366.4"/>
</dbReference>
<dbReference type="PDB" id="5XTE">
    <property type="method" value="EM"/>
    <property type="resolution" value="3.40 A"/>
    <property type="chains" value="K/W=35-453"/>
</dbReference>
<dbReference type="PDB" id="5XTH">
    <property type="method" value="EM"/>
    <property type="resolution" value="3.90 A"/>
    <property type="chains" value="AK/AW=35-453"/>
</dbReference>
<dbReference type="PDB" id="5XTI">
    <property type="method" value="EM"/>
    <property type="resolution" value="17.40 A"/>
    <property type="chains" value="AK/AW=35-453"/>
</dbReference>
<dbReference type="PDBsum" id="5XTE"/>
<dbReference type="PDBsum" id="5XTH"/>
<dbReference type="PDBsum" id="5XTI"/>
<dbReference type="SMR" id="P22695"/>
<dbReference type="BioGRID" id="113231">
    <property type="interactions" value="369"/>
</dbReference>
<dbReference type="ComplexPortal" id="CPX-560">
    <property type="entry name" value="Mitochondrial respiratory chain complex III"/>
</dbReference>
<dbReference type="FunCoup" id="P22695">
    <property type="interactions" value="1507"/>
</dbReference>
<dbReference type="IntAct" id="P22695">
    <property type="interactions" value="100"/>
</dbReference>
<dbReference type="MINT" id="P22695"/>
<dbReference type="STRING" id="9606.ENSP00000268379"/>
<dbReference type="DrugBank" id="DB07763">
    <property type="generic name" value="(5S)-3-ANILINO-5-(2,4-DIFLUOROPHENYL)-5-METHYL-1,3-OXAZOLIDINE-2,4-DIONE"/>
</dbReference>
<dbReference type="DrugBank" id="DB07778">
    <property type="generic name" value="(S)-famoxadone"/>
</dbReference>
<dbReference type="DrugBank" id="DB04141">
    <property type="generic name" value="2-Hexyloxy-6-Hydroxymethyl-Tetrahydro-Pyran-3,4,5-Triol"/>
</dbReference>
<dbReference type="DrugBank" id="DB08453">
    <property type="generic name" value="2-Nonyl-4-quinolinol 1-oxide"/>
</dbReference>
<dbReference type="DrugBank" id="DB04799">
    <property type="generic name" value="6-Hydroxy-5-undecyl-4,7-benzothiazoledione"/>
</dbReference>
<dbReference type="DrugBank" id="DB07401">
    <property type="generic name" value="Azoxystrobin"/>
</dbReference>
<dbReference type="DrugBank" id="DB08330">
    <property type="generic name" value="METHYL (2Z)-3-METHOXY-2-{2-[(E)-2-PHENYLVINYL]PHENYL}ACRYLATE"/>
</dbReference>
<dbReference type="DrugBank" id="DB08690">
    <property type="generic name" value="Ubiquinone Q2"/>
</dbReference>
<dbReference type="MEROPS" id="M16.974"/>
<dbReference type="CarbonylDB" id="P22695"/>
<dbReference type="GlyCosmos" id="P22695">
    <property type="glycosylation" value="2 sites, 1 glycan"/>
</dbReference>
<dbReference type="GlyGen" id="P22695">
    <property type="glycosylation" value="3 sites, 5 N-linked glycans (1 site), 1 O-linked glycan (2 sites)"/>
</dbReference>
<dbReference type="iPTMnet" id="P22695"/>
<dbReference type="MetOSite" id="P22695"/>
<dbReference type="PhosphoSitePlus" id="P22695"/>
<dbReference type="SwissPalm" id="P22695"/>
<dbReference type="BioMuta" id="UQCRC2"/>
<dbReference type="DMDM" id="21903482"/>
<dbReference type="REPRODUCTION-2DPAGE" id="IPI00305383"/>
<dbReference type="CPTAC" id="CPTAC-138"/>
<dbReference type="CPTAC" id="CPTAC-139"/>
<dbReference type="jPOST" id="P22695"/>
<dbReference type="MassIVE" id="P22695"/>
<dbReference type="PaxDb" id="9606-ENSP00000268379"/>
<dbReference type="PeptideAtlas" id="P22695"/>
<dbReference type="ProteomicsDB" id="54028"/>
<dbReference type="Pumba" id="P22695"/>
<dbReference type="TopDownProteomics" id="P22695"/>
<dbReference type="Antibodypedia" id="1267">
    <property type="antibodies" value="244 antibodies from 30 providers"/>
</dbReference>
<dbReference type="DNASU" id="7385"/>
<dbReference type="Ensembl" id="ENST00000268379.9">
    <property type="protein sequence ID" value="ENSP00000268379.4"/>
    <property type="gene ID" value="ENSG00000140740.11"/>
</dbReference>
<dbReference type="GeneID" id="7385"/>
<dbReference type="KEGG" id="hsa:7385"/>
<dbReference type="MANE-Select" id="ENST00000268379.9">
    <property type="protein sequence ID" value="ENSP00000268379.4"/>
    <property type="RefSeq nucleotide sequence ID" value="NM_003366.4"/>
    <property type="RefSeq protein sequence ID" value="NP_003357.2"/>
</dbReference>
<dbReference type="UCSC" id="uc002djx.4">
    <property type="organism name" value="human"/>
</dbReference>
<dbReference type="AGR" id="HGNC:12586"/>
<dbReference type="CTD" id="7385"/>
<dbReference type="DisGeNET" id="7385"/>
<dbReference type="GeneCards" id="UQCRC2"/>
<dbReference type="HGNC" id="HGNC:12586">
    <property type="gene designation" value="UQCRC2"/>
</dbReference>
<dbReference type="HPA" id="ENSG00000140740">
    <property type="expression patterns" value="Tissue enhanced (tongue)"/>
</dbReference>
<dbReference type="MalaCards" id="UQCRC2"/>
<dbReference type="MIM" id="191329">
    <property type="type" value="gene"/>
</dbReference>
<dbReference type="MIM" id="615160">
    <property type="type" value="phenotype"/>
</dbReference>
<dbReference type="neXtProt" id="NX_P22695"/>
<dbReference type="OpenTargets" id="ENSG00000140740"/>
<dbReference type="Orphanet" id="1460">
    <property type="disease" value="Isolated complex III deficiency"/>
</dbReference>
<dbReference type="PharmGKB" id="PA37217"/>
<dbReference type="VEuPathDB" id="HostDB:ENSG00000140740"/>
<dbReference type="eggNOG" id="KOG2583">
    <property type="taxonomic scope" value="Eukaryota"/>
</dbReference>
<dbReference type="GeneTree" id="ENSGT00940000154915"/>
<dbReference type="HOGENOM" id="CLU_009902_0_0_1"/>
<dbReference type="InParanoid" id="P22695"/>
<dbReference type="OMA" id="APKFALY"/>
<dbReference type="OrthoDB" id="6369905at2759"/>
<dbReference type="PAN-GO" id="P22695">
    <property type="GO annotations" value="1 GO annotation based on evolutionary models"/>
</dbReference>
<dbReference type="PhylomeDB" id="P22695"/>
<dbReference type="TreeFam" id="TF105033"/>
<dbReference type="BioCyc" id="MetaCyc:HS06753-MONOMER"/>
<dbReference type="PathwayCommons" id="P22695"/>
<dbReference type="Reactome" id="R-HSA-611105">
    <property type="pathway name" value="Respiratory electron transport"/>
</dbReference>
<dbReference type="Reactome" id="R-HSA-9837999">
    <property type="pathway name" value="Mitochondrial protein degradation"/>
</dbReference>
<dbReference type="Reactome" id="R-HSA-9865881">
    <property type="pathway name" value="Complex III assembly"/>
</dbReference>
<dbReference type="SignaLink" id="P22695"/>
<dbReference type="SIGNOR" id="P22695"/>
<dbReference type="BioGRID-ORCS" id="7385">
    <property type="hits" value="427 hits in 1170 CRISPR screens"/>
</dbReference>
<dbReference type="CD-CODE" id="FB4E32DD">
    <property type="entry name" value="Presynaptic clusters and postsynaptic densities"/>
</dbReference>
<dbReference type="ChiTaRS" id="UQCRC2">
    <property type="organism name" value="human"/>
</dbReference>
<dbReference type="GeneWiki" id="UQCRC2"/>
<dbReference type="GenomeRNAi" id="7385"/>
<dbReference type="Pharos" id="P22695">
    <property type="development level" value="Tbio"/>
</dbReference>
<dbReference type="PRO" id="PR:P22695"/>
<dbReference type="Proteomes" id="UP000005640">
    <property type="component" value="Chromosome 16"/>
</dbReference>
<dbReference type="RNAct" id="P22695">
    <property type="molecule type" value="protein"/>
</dbReference>
<dbReference type="Bgee" id="ENSG00000140740">
    <property type="expression patterns" value="Expressed in heart right ventricle and 210 other cell types or tissues"/>
</dbReference>
<dbReference type="ExpressionAtlas" id="P22695">
    <property type="expression patterns" value="baseline and differential"/>
</dbReference>
<dbReference type="GO" id="GO:0005743">
    <property type="term" value="C:mitochondrial inner membrane"/>
    <property type="evidence" value="ECO:0000314"/>
    <property type="project" value="ComplexPortal"/>
</dbReference>
<dbReference type="GO" id="GO:0005739">
    <property type="term" value="C:mitochondrion"/>
    <property type="evidence" value="ECO:0000314"/>
    <property type="project" value="HPA"/>
</dbReference>
<dbReference type="GO" id="GO:0005654">
    <property type="term" value="C:nucleoplasm"/>
    <property type="evidence" value="ECO:0000314"/>
    <property type="project" value="HPA"/>
</dbReference>
<dbReference type="GO" id="GO:0045275">
    <property type="term" value="C:respiratory chain complex III"/>
    <property type="evidence" value="ECO:0000314"/>
    <property type="project" value="UniProtKB"/>
</dbReference>
<dbReference type="GO" id="GO:0046872">
    <property type="term" value="F:metal ion binding"/>
    <property type="evidence" value="ECO:0007669"/>
    <property type="project" value="InterPro"/>
</dbReference>
<dbReference type="GO" id="GO:0004222">
    <property type="term" value="F:metalloendopeptidase activity"/>
    <property type="evidence" value="ECO:0007669"/>
    <property type="project" value="InterPro"/>
</dbReference>
<dbReference type="GO" id="GO:0009060">
    <property type="term" value="P:aerobic respiration"/>
    <property type="evidence" value="ECO:0000304"/>
    <property type="project" value="ProtInc"/>
</dbReference>
<dbReference type="GO" id="GO:0045333">
    <property type="term" value="P:cellular respiration"/>
    <property type="evidence" value="ECO:0000303"/>
    <property type="project" value="ComplexPortal"/>
</dbReference>
<dbReference type="GO" id="GO:0006122">
    <property type="term" value="P:mitochondrial electron transport, ubiquinol to cytochrome c"/>
    <property type="evidence" value="ECO:0000303"/>
    <property type="project" value="ComplexPortal"/>
</dbReference>
<dbReference type="GO" id="GO:0006119">
    <property type="term" value="P:oxidative phosphorylation"/>
    <property type="evidence" value="ECO:0000304"/>
    <property type="project" value="ProtInc"/>
</dbReference>
<dbReference type="GO" id="GO:0006508">
    <property type="term" value="P:proteolysis"/>
    <property type="evidence" value="ECO:0007669"/>
    <property type="project" value="InterPro"/>
</dbReference>
<dbReference type="FunFam" id="3.30.830.10:FF:000018">
    <property type="entry name" value="Cytochrome b-c1 complex subunit 2, mitochondrial"/>
    <property type="match status" value="1"/>
</dbReference>
<dbReference type="FunFam" id="3.30.830.10:FF:000026">
    <property type="entry name" value="Cytochrome b-c1 complex subunit 2, mitochondrial"/>
    <property type="match status" value="1"/>
</dbReference>
<dbReference type="Gene3D" id="3.30.830.10">
    <property type="entry name" value="Metalloenzyme, LuxS/M16 peptidase-like"/>
    <property type="match status" value="2"/>
</dbReference>
<dbReference type="InterPro" id="IPR011249">
    <property type="entry name" value="Metalloenz_LuxS/M16"/>
</dbReference>
<dbReference type="InterPro" id="IPR050361">
    <property type="entry name" value="MPP/UQCRC_Complex"/>
</dbReference>
<dbReference type="InterPro" id="IPR011765">
    <property type="entry name" value="Pept_M16_N"/>
</dbReference>
<dbReference type="InterPro" id="IPR001431">
    <property type="entry name" value="Pept_M16_Zn_BS"/>
</dbReference>
<dbReference type="InterPro" id="IPR007863">
    <property type="entry name" value="Peptidase_M16_C"/>
</dbReference>
<dbReference type="PANTHER" id="PTHR11851:SF226">
    <property type="entry name" value="CYTOCHROME B-C1 COMPLEX SUBUNIT 2, MITOCHONDRIAL"/>
    <property type="match status" value="1"/>
</dbReference>
<dbReference type="PANTHER" id="PTHR11851">
    <property type="entry name" value="METALLOPROTEASE"/>
    <property type="match status" value="1"/>
</dbReference>
<dbReference type="Pfam" id="PF00675">
    <property type="entry name" value="Peptidase_M16"/>
    <property type="match status" value="1"/>
</dbReference>
<dbReference type="Pfam" id="PF05193">
    <property type="entry name" value="Peptidase_M16_C"/>
    <property type="match status" value="1"/>
</dbReference>
<dbReference type="SUPFAM" id="SSF63411">
    <property type="entry name" value="LuxS/MPP-like metallohydrolase"/>
    <property type="match status" value="2"/>
</dbReference>
<dbReference type="PROSITE" id="PS00143">
    <property type="entry name" value="INSULINASE"/>
    <property type="match status" value="1"/>
</dbReference>
<comment type="function">
    <text evidence="1 2 10">Component of the ubiquinol-cytochrome c oxidoreductase, a multisubunit transmembrane complex that is part of the mitochondrial electron transport chain which drives oxidative phosphorylation. The respiratory chain contains 3 multisubunit complexes succinate dehydrogenase (complex II, CII), ubiquinol-cytochrome c oxidoreductase (cytochrome b-c1 complex, complex III, CIII) and cytochrome c oxidase (complex IV, CIV), that cooperate to transfer electrons derived from NADH and succinate to molecular oxygen, creating an electrochemical gradient over the inner membrane that drives transmembrane transport and the ATP synthase. The cytochrome b-c1 complex catalyzes electron transfer from ubiquinol to cytochrome c, linking this redox reaction to translocation of protons across the mitochondrial inner membrane, with protons being carried across the membrane as hydrogens on the quinol. In the process called Q cycle, 2 protons are consumed from the matrix, 4 protons are released into the intermembrane space and 2 electrons are passed to cytochrome c (By similarity). The 2 core subunits UQCRC1/QCR1 and UQCRC2/QCR2 are homologous to the 2 mitochondrial-processing peptidase (MPP) subunits beta-MPP and alpha-MPP respectively, and they seem to have preserved their MPP processing properties (By similarity). May be involved in the in situ processing of UQCRFS1 into the mature Rieske protein and its mitochondrial targeting sequence (MTS)/subunit 9 when incorporated into complex III (Probable).</text>
</comment>
<comment type="subunit">
    <text evidence="2 3 7 8">Component of the ubiquinol-cytochrome c oxidoreductase (cytochrome b-c1 complex, complex III, CIII), a multisubunit enzyme composed of 11 subunits. The complex is composed of 3 respiratory subunits cytochrome b, cytochrome c1 and Rieske protein UQCRFS1, 2 core protein subunits UQCRC1/QCR1 and UQCRC2/QCR2, and 6 low-molecular weight protein subunits UQCRH/QCR6, UQCRB/QCR7, UQCRQ/QCR8, UQCR10/QCR9, UQCR11/QCR10 and subunit 9, the cleavage product of Rieske protein UQCRFS1 (By similarity). The complex exists as an obligatory dimer and forms supercomplexes (SCs) in the inner mitochondrial membrane with NADH-ubiquinone oxidoreductase (complex I, CI) and cytochrome c oxidase (complex IV, CIV), resulting in different assemblies (supercomplex SCI(1)III(2)IV(1) and megacomplex MCI(2)III(2)IV(2)) (PubMed:28844695). Interacts with RAB5IF (PubMed:31536960). Interacts with STMP1 (By similarity).</text>
</comment>
<comment type="interaction">
    <interactant intactId="EBI-1051424">
        <id>P22695</id>
    </interactant>
    <interactant intactId="EBI-751746">
        <id>Q15027</id>
        <label>ACAP1</label>
    </interactant>
    <organismsDiffer>false</organismsDiffer>
    <experiments>3</experiments>
</comment>
<comment type="interaction">
    <interactant intactId="EBI-1051424">
        <id>P22695</id>
    </interactant>
    <interactant intactId="EBI-766279">
        <id>O00555</id>
        <label>CACNA1A</label>
    </interactant>
    <organismsDiffer>false</organismsDiffer>
    <experiments>2</experiments>
</comment>
<comment type="interaction">
    <interactant intactId="EBI-1051424">
        <id>P22695</id>
    </interactant>
    <interactant intactId="EBI-25858908">
        <id>Q8N7T0</id>
        <label>hCG_1820408</label>
    </interactant>
    <organismsDiffer>false</organismsDiffer>
    <experiments>3</experiments>
</comment>
<comment type="interaction">
    <interactant intactId="EBI-1051424">
        <id>P22695</id>
    </interactant>
    <interactant intactId="EBI-25835523">
        <id>Q9H2C1</id>
        <label>LHX5</label>
    </interactant>
    <organismsDiffer>false</organismsDiffer>
    <experiments>3</experiments>
</comment>
<comment type="interaction">
    <interactant intactId="EBI-1051424">
        <id>P22695</id>
    </interactant>
    <interactant intactId="EBI-632715">
        <id>Q13573</id>
        <label>SNW1</label>
    </interactant>
    <organismsDiffer>false</organismsDiffer>
    <experiments>3</experiments>
</comment>
<comment type="subcellular location">
    <subcellularLocation>
        <location evidence="1">Mitochondrion inner membrane</location>
        <topology evidence="1">Peripheral membrane protein</topology>
        <orientation evidence="1">Matrix side</orientation>
    </subcellularLocation>
</comment>
<comment type="disease" evidence="5">
    <disease id="DI-03739">
        <name>Mitochondrial complex III deficiency, nuclear type 5</name>
        <acronym>MC3DN5</acronym>
        <description>A disorder of the mitochondrial respiratory chain resulting in a highly variable phenotype depending on which tissues are affected. Clinical features include mitochondrial encephalopathy, psychomotor retardation, ataxia, severe failure to thrive, liver dysfunction, renal tubulopathy, muscle weakness and exercise intolerance.</description>
        <dbReference type="MIM" id="615160"/>
    </disease>
    <text>The disease is caused by variants affecting the gene represented in this entry.</text>
</comment>
<comment type="similarity">
    <text evidence="9">Belongs to the peptidase M16 family. UQCRC2/QCR2 subfamily.</text>
</comment>
<protein>
    <recommendedName>
        <fullName>Cytochrome b-c1 complex subunit 2, mitochondrial</fullName>
    </recommendedName>
    <alternativeName>
        <fullName>Complex III subunit 2</fullName>
    </alternativeName>
    <alternativeName>
        <fullName>Core protein II</fullName>
    </alternativeName>
    <alternativeName>
        <fullName>Ubiquinol-cytochrome-c reductase complex core protein 2</fullName>
    </alternativeName>
</protein>
<name>QCR2_HUMAN</name>
<keyword id="KW-0002">3D-structure</keyword>
<keyword id="KW-0007">Acetylation</keyword>
<keyword id="KW-0903">Direct protein sequencing</keyword>
<keyword id="KW-0225">Disease variant</keyword>
<keyword id="KW-0249">Electron transport</keyword>
<keyword id="KW-0472">Membrane</keyword>
<keyword id="KW-0496">Mitochondrion</keyword>
<keyword id="KW-0999">Mitochondrion inner membrane</keyword>
<keyword id="KW-1274">Primary mitochondrial disease</keyword>
<keyword id="KW-1267">Proteomics identification</keyword>
<keyword id="KW-1185">Reference proteome</keyword>
<keyword id="KW-0679">Respiratory chain</keyword>
<keyword id="KW-0809">Transit peptide</keyword>
<keyword id="KW-0813">Transport</keyword>
<feature type="transit peptide" description="Mitochondrion">
    <location>
        <begin position="1"/>
        <end position="14"/>
    </location>
</feature>
<feature type="chain" id="PRO_0000026791" description="Cytochrome b-c1 complex subunit 2, mitochondrial">
    <location>
        <begin position="15"/>
        <end position="453"/>
    </location>
</feature>
<feature type="modified residue" description="N6-acetyllysine" evidence="3">
    <location>
        <position position="66"/>
    </location>
</feature>
<feature type="modified residue" description="N6-acetyllysine" evidence="3">
    <location>
        <position position="199"/>
    </location>
</feature>
<feature type="modified residue" description="N6-acetyllysine" evidence="3">
    <location>
        <position position="250"/>
    </location>
</feature>
<feature type="sequence variant" id="VAR_029336" description="In dbSNP:rs2228473.">
    <original>R</original>
    <variation>S</variation>
    <location>
        <position position="148"/>
    </location>
</feature>
<feature type="sequence variant" id="VAR_034582" description="In dbSNP:rs4850." evidence="6">
    <original>R</original>
    <variation>Q</variation>
    <location>
        <position position="183"/>
    </location>
</feature>
<feature type="sequence variant" id="VAR_069709" description="In MC3DN5; dbSNP:rs374661051." evidence="5">
    <original>R</original>
    <variation>W</variation>
    <location>
        <position position="183"/>
    </location>
</feature>
<feature type="sequence variant" id="VAR_036479" description="In a colorectal cancer sample; somatic mutation." evidence="4">
    <original>F</original>
    <variation>Y</variation>
    <location>
        <position position="208"/>
    </location>
</feature>
<feature type="sequence variant" id="VAR_034583" description="In dbSNP:rs11863893.">
    <original>R</original>
    <variation>H</variation>
    <location>
        <position position="254"/>
    </location>
</feature>
<feature type="sequence conflict" description="In Ref. 1; AAA35710." evidence="9" ref="1">
    <original>T</original>
    <variation>R</variation>
    <location>
        <position position="360"/>
    </location>
</feature>
<feature type="strand" evidence="11">
    <location>
        <begin position="48"/>
        <end position="51"/>
    </location>
</feature>
<feature type="strand" evidence="11">
    <location>
        <begin position="57"/>
        <end position="66"/>
    </location>
</feature>
<feature type="helix" evidence="11">
    <location>
        <begin position="69"/>
        <end position="71"/>
    </location>
</feature>
<feature type="helix" evidence="11">
    <location>
        <begin position="79"/>
        <end position="83"/>
    </location>
</feature>
<feature type="helix" evidence="11">
    <location>
        <begin position="85"/>
        <end position="88"/>
    </location>
</feature>
<feature type="strand" evidence="11">
    <location>
        <begin position="91"/>
        <end position="93"/>
    </location>
</feature>
<feature type="helix" evidence="11">
    <location>
        <begin position="96"/>
        <end position="106"/>
    </location>
</feature>
<feature type="strand" evidence="11">
    <location>
        <begin position="109"/>
        <end position="114"/>
    </location>
</feature>
<feature type="strand" evidence="11">
    <location>
        <begin position="119"/>
        <end position="126"/>
    </location>
</feature>
<feature type="helix" evidence="11">
    <location>
        <begin position="127"/>
        <end position="129"/>
    </location>
</feature>
<feature type="helix" evidence="11">
    <location>
        <begin position="130"/>
        <end position="142"/>
    </location>
</feature>
<feature type="helix" evidence="11">
    <location>
        <begin position="148"/>
        <end position="154"/>
    </location>
</feature>
<feature type="helix" evidence="11">
    <location>
        <begin position="157"/>
        <end position="165"/>
    </location>
</feature>
<feature type="helix" evidence="11">
    <location>
        <begin position="169"/>
        <end position="181"/>
    </location>
</feature>
<feature type="strand" evidence="11">
    <location>
        <begin position="182"/>
        <end position="184"/>
    </location>
</feature>
<feature type="helix" evidence="11">
    <location>
        <begin position="185"/>
        <end position="187"/>
    </location>
</feature>
<feature type="helix" evidence="11">
    <location>
        <begin position="194"/>
        <end position="196"/>
    </location>
</feature>
<feature type="turn" evidence="11">
    <location>
        <begin position="197"/>
        <end position="199"/>
    </location>
</feature>
<feature type="helix" evidence="11">
    <location>
        <begin position="202"/>
        <end position="212"/>
    </location>
</feature>
<feature type="turn" evidence="11">
    <location>
        <begin position="215"/>
        <end position="217"/>
    </location>
</feature>
<feature type="strand" evidence="11">
    <location>
        <begin position="218"/>
        <end position="225"/>
    </location>
</feature>
<feature type="helix" evidence="11">
    <location>
        <begin position="227"/>
        <end position="233"/>
    </location>
</feature>
<feature type="helix" evidence="11">
    <location>
        <begin position="234"/>
        <end position="238"/>
    </location>
</feature>
<feature type="strand" evidence="11">
    <location>
        <begin position="257"/>
        <end position="259"/>
    </location>
</feature>
<feature type="strand" evidence="11">
    <location>
        <begin position="265"/>
        <end position="275"/>
    </location>
</feature>
<feature type="strand" evidence="11">
    <location>
        <begin position="278"/>
        <end position="280"/>
    </location>
</feature>
<feature type="helix" evidence="11">
    <location>
        <begin position="281"/>
        <end position="292"/>
    </location>
</feature>
<feature type="helix" evidence="11">
    <location>
        <begin position="308"/>
        <end position="314"/>
    </location>
</feature>
<feature type="strand" evidence="11">
    <location>
        <begin position="321"/>
        <end position="328"/>
    </location>
</feature>
<feature type="strand" evidence="11">
    <location>
        <begin position="334"/>
        <end position="343"/>
    </location>
</feature>
<feature type="turn" evidence="11">
    <location>
        <begin position="344"/>
        <end position="346"/>
    </location>
</feature>
<feature type="helix" evidence="11">
    <location>
        <begin position="347"/>
        <end position="362"/>
    </location>
</feature>
<feature type="helix" evidence="11">
    <location>
        <begin position="368"/>
        <end position="387"/>
    </location>
</feature>
<feature type="helix" evidence="11">
    <location>
        <begin position="389"/>
        <end position="402"/>
    </location>
</feature>
<feature type="helix" evidence="11">
    <location>
        <begin position="409"/>
        <end position="418"/>
    </location>
</feature>
<feature type="helix" evidence="11">
    <location>
        <begin position="421"/>
        <end position="433"/>
    </location>
</feature>
<feature type="strand" evidence="11">
    <location>
        <begin position="437"/>
        <end position="440"/>
    </location>
</feature>
<sequence length="453" mass="48443">MKLLTRAGSFSRFYSLKVAPKVKATAAPAGAPPQPQDLEFTKLPNGLVIASLENYSPVSRIGLFIKAGSRYEDFSNLGTTHLLRLTSSLTTKGASSFKITRGIEAVGGKLSVTATRENMAYTVECLRGDVDILMEFLLNVTTAPEFRRWEVADLQPQLKIDKAVAFQNPQTHVIENLHAAAYRNALANPLYCPDYRIGKVTSEELHYFVQNHFTSARMALIGLGVSHPVLKQVAEQFLNMRGGLGLSGAKANYRGGEIREQNGDSLVHAAFVAESAVAGSAEANAFSVLQHVLGAGPHVKRGSNTTSHLHQAVAKATQQPFDVSAFNASYSDSGLFGIYTISQATAAGDVIKAAYNQVKTIAQGNLSNTDVQAAKNKLKAGYLMSVESSECFLEEVGSQALVAGSYMPPSTVLQQIDSVANADIINAAKKFVSGQKSMAASGNLGHTPFVDEL</sequence>
<gene>
    <name type="primary">UQCRC2</name>
</gene>